<organism>
    <name type="scientific">Pseudomonas paraeruginosa (strain DSM 24068 / PA7)</name>
    <name type="common">Pseudomonas aeruginosa (strain PA7)</name>
    <dbReference type="NCBI Taxonomy" id="381754"/>
    <lineage>
        <taxon>Bacteria</taxon>
        <taxon>Pseudomonadati</taxon>
        <taxon>Pseudomonadota</taxon>
        <taxon>Gammaproteobacteria</taxon>
        <taxon>Pseudomonadales</taxon>
        <taxon>Pseudomonadaceae</taxon>
        <taxon>Pseudomonas</taxon>
        <taxon>Pseudomonas paraeruginosa</taxon>
    </lineage>
</organism>
<feature type="chain" id="PRO_1000045052" description="Probable Fe(2+)-trafficking protein">
    <location>
        <begin position="1"/>
        <end position="90"/>
    </location>
</feature>
<comment type="function">
    <text evidence="1">Could be a mediator in iron transactions between iron acquisition and iron-requiring processes, such as synthesis and/or repair of Fe-S clusters in biosynthetic enzymes.</text>
</comment>
<comment type="similarity">
    <text evidence="1">Belongs to the Fe(2+)-trafficking protein family.</text>
</comment>
<gene>
    <name type="ordered locus">PSPA7_5885</name>
</gene>
<protein>
    <recommendedName>
        <fullName evidence="1">Probable Fe(2+)-trafficking protein</fullName>
    </recommendedName>
</protein>
<evidence type="ECO:0000255" key="1">
    <source>
        <dbReference type="HAMAP-Rule" id="MF_00686"/>
    </source>
</evidence>
<keyword id="KW-0408">Iron</keyword>
<accession>A6VDR9</accession>
<sequence length="90" mass="10625">MSRTVMCRKYHEELPGLDRPPYPGAKGEDIYNNVSRKAWDEWQKHQTMLINERRLNMMNAEDRKFLQQEMDKFLSGEDYAKADGYVPPSA</sequence>
<reference key="1">
    <citation type="submission" date="2007-06" db="EMBL/GenBank/DDBJ databases">
        <authorList>
            <person name="Dodson R.J."/>
            <person name="Harkins D."/>
            <person name="Paulsen I.T."/>
        </authorList>
    </citation>
    <scope>NUCLEOTIDE SEQUENCE [LARGE SCALE GENOMIC DNA]</scope>
    <source>
        <strain>DSM 24068 / PA7</strain>
    </source>
</reference>
<name>FETP_PSEP7</name>
<dbReference type="EMBL" id="CP000744">
    <property type="protein sequence ID" value="ABR83095.1"/>
    <property type="molecule type" value="Genomic_DNA"/>
</dbReference>
<dbReference type="RefSeq" id="WP_003096100.1">
    <property type="nucleotide sequence ID" value="NC_009656.1"/>
</dbReference>
<dbReference type="SMR" id="A6VDR9"/>
<dbReference type="KEGG" id="pap:PSPA7_5885"/>
<dbReference type="HOGENOM" id="CLU_170994_0_0_6"/>
<dbReference type="Proteomes" id="UP000001582">
    <property type="component" value="Chromosome"/>
</dbReference>
<dbReference type="GO" id="GO:0005829">
    <property type="term" value="C:cytosol"/>
    <property type="evidence" value="ECO:0007669"/>
    <property type="project" value="TreeGrafter"/>
</dbReference>
<dbReference type="GO" id="GO:0005506">
    <property type="term" value="F:iron ion binding"/>
    <property type="evidence" value="ECO:0007669"/>
    <property type="project" value="UniProtKB-UniRule"/>
</dbReference>
<dbReference type="GO" id="GO:0034599">
    <property type="term" value="P:cellular response to oxidative stress"/>
    <property type="evidence" value="ECO:0007669"/>
    <property type="project" value="TreeGrafter"/>
</dbReference>
<dbReference type="FunFam" id="1.10.3880.10:FF:000001">
    <property type="entry name" value="Probable Fe(2+)-trafficking protein"/>
    <property type="match status" value="1"/>
</dbReference>
<dbReference type="Gene3D" id="1.10.3880.10">
    <property type="entry name" value="Fe(II) trafficking protein YggX"/>
    <property type="match status" value="1"/>
</dbReference>
<dbReference type="HAMAP" id="MF_00686">
    <property type="entry name" value="Fe_traffic_YggX"/>
    <property type="match status" value="1"/>
</dbReference>
<dbReference type="InterPro" id="IPR007457">
    <property type="entry name" value="Fe_traffick_prot_YggX"/>
</dbReference>
<dbReference type="InterPro" id="IPR036766">
    <property type="entry name" value="Fe_traffick_prot_YggX_sf"/>
</dbReference>
<dbReference type="NCBIfam" id="NF003817">
    <property type="entry name" value="PRK05408.1"/>
    <property type="match status" value="1"/>
</dbReference>
<dbReference type="PANTHER" id="PTHR36965">
    <property type="entry name" value="FE(2+)-TRAFFICKING PROTEIN-RELATED"/>
    <property type="match status" value="1"/>
</dbReference>
<dbReference type="PANTHER" id="PTHR36965:SF1">
    <property type="entry name" value="FE(2+)-TRAFFICKING PROTEIN-RELATED"/>
    <property type="match status" value="1"/>
</dbReference>
<dbReference type="Pfam" id="PF04362">
    <property type="entry name" value="Iron_traffic"/>
    <property type="match status" value="1"/>
</dbReference>
<dbReference type="PIRSF" id="PIRSF029827">
    <property type="entry name" value="Fe_traffic_YggX"/>
    <property type="match status" value="1"/>
</dbReference>
<dbReference type="SUPFAM" id="SSF111148">
    <property type="entry name" value="YggX-like"/>
    <property type="match status" value="1"/>
</dbReference>
<proteinExistence type="inferred from homology"/>